<sequence>MSLLTEVETPIRNEWGCRCNDSSDPLVVAASIIGILHLILWILDRLFFKCIYRFFEHGLKRGPSTEGVPESMREEYRKEQQSAVDADDSHFVSIELE</sequence>
<protein>
    <recommendedName>
        <fullName evidence="1">Matrix protein 2</fullName>
    </recommendedName>
    <alternativeName>
        <fullName evidence="1">Proton channel protein M2</fullName>
    </alternativeName>
</protein>
<comment type="function">
    <text evidence="1">Forms a proton-selective ion channel that is necessary for the efficient release of the viral genome during virus entry. After attaching to the cell surface, the virion enters the cell by endocytosis. Acidification of the endosome triggers M2 ion channel activity. The influx of protons into virion interior is believed to disrupt interactions between the viral ribonucleoprotein (RNP), matrix protein 1 (M1), and lipid bilayers, thereby freeing the viral genome from interaction with viral proteins and enabling RNA segments to migrate to the host cell nucleus, where influenza virus RNA transcription and replication occur. Also plays a role in viral proteins secretory pathway. Elevates the intravesicular pH of normally acidic compartments, such as trans-Golgi network, preventing newly formed hemagglutinin from premature switching to the fusion-active conformation.</text>
</comment>
<comment type="activity regulation">
    <text>The M2 protein from most influenza A strains is inhibited by amantadine and rimantadine, resulting in viral uncoating incapacity. Emergence of amantadine-resistant variants is usually rapid.</text>
</comment>
<comment type="subunit">
    <text evidence="1">Homotetramer; composed of two disulfide-linked dimers held together by non-covalent interactions. May interact with matrix protein 1.</text>
</comment>
<comment type="subcellular location">
    <subcellularLocation>
        <location evidence="1">Virion membrane</location>
    </subcellularLocation>
    <subcellularLocation>
        <location evidence="1">Host apical cell membrane</location>
        <topology evidence="1">Single-pass type III membrane protein</topology>
    </subcellularLocation>
    <text evidence="1">Abundantly expressed at the apical plasma membrane in infected polarized epithelial cells, in close proximity to budding and assembled virions. Minor component of virions (only 16-20 molecules/virion).</text>
</comment>
<comment type="alternative products">
    <event type="alternative splicing"/>
    <isoform>
        <id>Q463X4-1</id>
        <name>M2</name>
        <sequence type="displayed"/>
    </isoform>
    <isoform>
        <id>Q463X3-1</id>
        <name>M1</name>
        <sequence type="external"/>
    </isoform>
    <text>Only the first 9 residues are shared by the 2 isoforms.</text>
</comment>
<comment type="domain">
    <text evidence="1">Cytoplasmic tail plays an important role in virion assembly and morphogenesis.</text>
</comment>
<comment type="miscellaneous">
    <text evidence="1">When the channel is activated, one or more imidazole moieties of His-37 probably become bi-protonated.</text>
</comment>
<comment type="similarity">
    <text evidence="1">Belongs to the influenza viruses matrix protein M2 family.</text>
</comment>
<evidence type="ECO:0000255" key="1">
    <source>
        <dbReference type="HAMAP-Rule" id="MF_04069"/>
    </source>
</evidence>
<evidence type="ECO:0000256" key="2">
    <source>
        <dbReference type="SAM" id="MobiDB-lite"/>
    </source>
</evidence>
<accession>Q463X4</accession>
<gene>
    <name evidence="1" type="primary">M</name>
</gene>
<proteinExistence type="inferred from homology"/>
<organismHost>
    <name type="scientific">Aves</name>
    <dbReference type="NCBI Taxonomy" id="8782"/>
</organismHost>
<organismHost>
    <name type="scientific">Cetacea</name>
    <name type="common">whales</name>
    <dbReference type="NCBI Taxonomy" id="9721"/>
</organismHost>
<organismHost>
    <name type="scientific">Homo sapiens</name>
    <name type="common">Human</name>
    <dbReference type="NCBI Taxonomy" id="9606"/>
</organismHost>
<organismHost>
    <name type="scientific">Phocidae</name>
    <name type="common">true seals</name>
    <dbReference type="NCBI Taxonomy" id="9709"/>
</organismHost>
<organismHost>
    <name type="scientific">Sus scrofa</name>
    <name type="common">Pig</name>
    <dbReference type="NCBI Taxonomy" id="9823"/>
</organismHost>
<organism>
    <name type="scientific">Influenza A virus (strain A/Memphis/102/1972 H3N2)</name>
    <dbReference type="NCBI Taxonomy" id="385640"/>
    <lineage>
        <taxon>Viruses</taxon>
        <taxon>Riboviria</taxon>
        <taxon>Orthornavirae</taxon>
        <taxon>Negarnaviricota</taxon>
        <taxon>Polyploviricotina</taxon>
        <taxon>Insthoviricetes</taxon>
        <taxon>Articulavirales</taxon>
        <taxon>Orthomyxoviridae</taxon>
        <taxon>Alphainfluenzavirus</taxon>
        <taxon>Alphainfluenzavirus influenzae</taxon>
        <taxon>Influenza A virus</taxon>
    </lineage>
</organism>
<feature type="chain" id="PRO_0000326353" description="Matrix protein 2">
    <location>
        <begin position="1"/>
        <end position="97"/>
    </location>
</feature>
<feature type="topological domain" description="Virion surface" evidence="1">
    <location>
        <begin position="1"/>
        <end position="22"/>
    </location>
</feature>
<feature type="transmembrane region" description="Helical; Signal-anchor for type III membrane protein" evidence="1">
    <location>
        <begin position="23"/>
        <end position="43"/>
    </location>
</feature>
<feature type="topological domain" description="Intravirion" evidence="1">
    <location>
        <begin position="44"/>
        <end position="97"/>
    </location>
</feature>
<feature type="region of interest" description="Disordered" evidence="2">
    <location>
        <begin position="60"/>
        <end position="88"/>
    </location>
</feature>
<feature type="compositionally biased region" description="Basic and acidic residues" evidence="2">
    <location>
        <begin position="71"/>
        <end position="80"/>
    </location>
</feature>
<feature type="site" description="Essential for channel activity, possibly by being protonated during channel activation, and by forming the channel gate and the selective filter" evidence="1">
    <location>
        <position position="37"/>
    </location>
</feature>
<feature type="site" description="Seems to be involved in pH gating" evidence="1">
    <location>
        <position position="41"/>
    </location>
</feature>
<feature type="modified residue" description="Phosphoserine; by host" evidence="1">
    <location>
        <position position="64"/>
    </location>
</feature>
<feature type="modified residue" description="Phosphoserine; by host" evidence="1">
    <location>
        <position position="82"/>
    </location>
</feature>
<feature type="modified residue" description="Phosphoserine; by host" evidence="1">
    <location>
        <position position="93"/>
    </location>
</feature>
<feature type="lipid moiety-binding region" description="S-palmitoyl cysteine; by host" evidence="1">
    <location>
        <position position="50"/>
    </location>
</feature>
<feature type="glycosylation site" description="N-linked (GlcNAc...) asparagine; by host" evidence="1">
    <location>
        <position position="20"/>
    </location>
</feature>
<feature type="disulfide bond" description="Interchain (with C-17)" evidence="1">
    <location>
        <position position="17"/>
    </location>
</feature>
<feature type="disulfide bond" description="Interchain (with C-19)" evidence="1">
    <location>
        <position position="19"/>
    </location>
</feature>
<dbReference type="EMBL" id="CY002097">
    <property type="protein sequence ID" value="AAZ43385.1"/>
    <property type="molecule type" value="Genomic_RNA"/>
</dbReference>
<dbReference type="SMR" id="Q463X4"/>
<dbReference type="IntAct" id="Q463X4">
    <property type="interactions" value="1"/>
</dbReference>
<dbReference type="GlyCosmos" id="Q463X4">
    <property type="glycosylation" value="1 site, No reported glycans"/>
</dbReference>
<dbReference type="Proteomes" id="UP000118421">
    <property type="component" value="Genome"/>
</dbReference>
<dbReference type="GO" id="GO:0020002">
    <property type="term" value="C:host cell plasma membrane"/>
    <property type="evidence" value="ECO:0007669"/>
    <property type="project" value="UniProtKB-SubCell"/>
</dbReference>
<dbReference type="GO" id="GO:0016020">
    <property type="term" value="C:membrane"/>
    <property type="evidence" value="ECO:0007669"/>
    <property type="project" value="UniProtKB-UniRule"/>
</dbReference>
<dbReference type="GO" id="GO:0055036">
    <property type="term" value="C:virion membrane"/>
    <property type="evidence" value="ECO:0007669"/>
    <property type="project" value="UniProtKB-SubCell"/>
</dbReference>
<dbReference type="GO" id="GO:0005216">
    <property type="term" value="F:monoatomic ion channel activity"/>
    <property type="evidence" value="ECO:0007669"/>
    <property type="project" value="UniProtKB-UniRule"/>
</dbReference>
<dbReference type="GO" id="GO:0015078">
    <property type="term" value="F:proton transmembrane transporter activity"/>
    <property type="evidence" value="ECO:0007669"/>
    <property type="project" value="UniProtKB-UniRule"/>
</dbReference>
<dbReference type="GO" id="GO:0051259">
    <property type="term" value="P:protein complex oligomerization"/>
    <property type="evidence" value="ECO:0007669"/>
    <property type="project" value="UniProtKB-UniRule"/>
</dbReference>
<dbReference type="GO" id="GO:0044694">
    <property type="term" value="P:symbiont genome entry into host cell via pore formation in plasma membrane"/>
    <property type="evidence" value="ECO:0007669"/>
    <property type="project" value="UniProtKB-UniRule"/>
</dbReference>
<dbReference type="GO" id="GO:0140321">
    <property type="term" value="P:symbiont-mediated suppression of host autophagy"/>
    <property type="evidence" value="ECO:0007669"/>
    <property type="project" value="UniProtKB-KW"/>
</dbReference>
<dbReference type="Gene3D" id="6.10.250.1640">
    <property type="match status" value="1"/>
</dbReference>
<dbReference type="HAMAP" id="MF_04069">
    <property type="entry name" value="INFV_M2"/>
    <property type="match status" value="1"/>
</dbReference>
<dbReference type="InterPro" id="IPR002089">
    <property type="entry name" value="Flu_M2"/>
</dbReference>
<dbReference type="Pfam" id="PF00599">
    <property type="entry name" value="Flu_M2"/>
    <property type="match status" value="1"/>
</dbReference>
<name>M2_I72A3</name>
<keyword id="KW-0025">Alternative splicing</keyword>
<keyword id="KW-1015">Disulfide bond</keyword>
<keyword id="KW-0325">Glycoprotein</keyword>
<keyword id="KW-1032">Host cell membrane</keyword>
<keyword id="KW-1043">Host membrane</keyword>
<keyword id="KW-0945">Host-virus interaction</keyword>
<keyword id="KW-0375">Hydrogen ion transport</keyword>
<keyword id="KW-1083">Inhibition of host autophagy by virus</keyword>
<keyword id="KW-0407">Ion channel</keyword>
<keyword id="KW-0406">Ion transport</keyword>
<keyword id="KW-0449">Lipoprotein</keyword>
<keyword id="KW-0472">Membrane</keyword>
<keyword id="KW-0564">Palmitate</keyword>
<keyword id="KW-0597">Phosphoprotein</keyword>
<keyword id="KW-0735">Signal-anchor</keyword>
<keyword id="KW-0812">Transmembrane</keyword>
<keyword id="KW-1133">Transmembrane helix</keyword>
<keyword id="KW-0813">Transport</keyword>
<keyword id="KW-1182">Viral ion channel</keyword>
<keyword id="KW-0946">Virion</keyword>
<reference key="1">
    <citation type="submission" date="2005-08" db="EMBL/GenBank/DDBJ databases">
        <title>The NIAID influenza genome sequencing project.</title>
        <authorList>
            <person name="Ghedin E."/>
            <person name="Spiro D."/>
            <person name="Miller N."/>
            <person name="Zaborsky J."/>
            <person name="Feldblyum T."/>
            <person name="Subbu V."/>
            <person name="Shumway M."/>
            <person name="Sparenborg J."/>
            <person name="Groveman L."/>
            <person name="Halpin R."/>
            <person name="Sitz J."/>
            <person name="Koo H."/>
            <person name="Salzberg S.L."/>
            <person name="Webster R.G."/>
            <person name="Hoffmann E."/>
            <person name="Krauss S."/>
            <person name="Naeve C."/>
            <person name="Bao Y."/>
            <person name="Bolotov P."/>
            <person name="Dernovoy D."/>
            <person name="Kiryutin B."/>
            <person name="Lipman D.J."/>
            <person name="Tatusova T."/>
        </authorList>
    </citation>
    <scope>NUCLEOTIDE SEQUENCE [GENOMIC RNA]</scope>
</reference>